<evidence type="ECO:0000255" key="1">
    <source>
        <dbReference type="HAMAP-Rule" id="MF_01682"/>
    </source>
</evidence>
<keyword id="KW-0028">Amino-acid biosynthesis</keyword>
<keyword id="KW-0223">Dioxygenase</keyword>
<keyword id="KW-0408">Iron</keyword>
<keyword id="KW-0479">Metal-binding</keyword>
<keyword id="KW-0486">Methionine biosynthesis</keyword>
<keyword id="KW-0533">Nickel</keyword>
<keyword id="KW-0560">Oxidoreductase</keyword>
<protein>
    <recommendedName>
        <fullName evidence="1">Acireductone dioxygenase</fullName>
    </recommendedName>
    <alternativeName>
        <fullName evidence="1">1,2-dihydroxy-3-keto-5-methylthiopentene dioxygenase</fullName>
        <shortName evidence="1">DHK-MTPene dioxygenase</shortName>
    </alternativeName>
    <alternativeName>
        <fullName evidence="1">Acireductone dioxygenase (Fe(2+)-requiring)</fullName>
        <shortName evidence="1">ARD'</shortName>
        <shortName evidence="1">Fe-ARD</shortName>
        <ecNumber evidence="1">1.13.11.54</ecNumber>
    </alternativeName>
    <alternativeName>
        <fullName evidence="1">Acireductone dioxygenase (Ni(2+)-requiring)</fullName>
        <shortName evidence="1">ARD</shortName>
        <shortName evidence="1">Ni-ARD</shortName>
        <ecNumber evidence="1">1.13.11.53</ecNumber>
    </alternativeName>
</protein>
<gene>
    <name evidence="1" type="primary">mtnD</name>
    <name type="ordered locus">BALH_3656</name>
</gene>
<reference key="1">
    <citation type="journal article" date="2007" name="J. Bacteriol.">
        <title>The complete genome sequence of Bacillus thuringiensis Al Hakam.</title>
        <authorList>
            <person name="Challacombe J.F."/>
            <person name="Altherr M.R."/>
            <person name="Xie G."/>
            <person name="Bhotika S.S."/>
            <person name="Brown N."/>
            <person name="Bruce D."/>
            <person name="Campbell C.S."/>
            <person name="Campbell M.L."/>
            <person name="Chen J."/>
            <person name="Chertkov O."/>
            <person name="Cleland C."/>
            <person name="Dimitrijevic M."/>
            <person name="Doggett N.A."/>
            <person name="Fawcett J.J."/>
            <person name="Glavina T."/>
            <person name="Goodwin L.A."/>
            <person name="Green L.D."/>
            <person name="Han C.S."/>
            <person name="Hill K.K."/>
            <person name="Hitchcock P."/>
            <person name="Jackson P.J."/>
            <person name="Keim P."/>
            <person name="Kewalramani A.R."/>
            <person name="Longmire J."/>
            <person name="Lucas S."/>
            <person name="Malfatti S."/>
            <person name="Martinez D."/>
            <person name="McMurry K."/>
            <person name="Meincke L.J."/>
            <person name="Misra M."/>
            <person name="Moseman B.L."/>
            <person name="Mundt M."/>
            <person name="Munk A.C."/>
            <person name="Okinaka R.T."/>
            <person name="Parson-Quintana B."/>
            <person name="Reilly L.P."/>
            <person name="Richardson P."/>
            <person name="Robinson D.L."/>
            <person name="Saunders E."/>
            <person name="Tapia R."/>
            <person name="Tesmer J.G."/>
            <person name="Thayer N."/>
            <person name="Thompson L.S."/>
            <person name="Tice H."/>
            <person name="Ticknor L.O."/>
            <person name="Wills P.L."/>
            <person name="Gilna P."/>
            <person name="Brettin T.S."/>
        </authorList>
    </citation>
    <scope>NUCLEOTIDE SEQUENCE [LARGE SCALE GENOMIC DNA]</scope>
    <source>
        <strain>Al Hakam</strain>
    </source>
</reference>
<comment type="function">
    <text evidence="1">Catalyzes 2 different reactions between oxygen and the acireductone 1,2-dihydroxy-3-keto-5-methylthiopentene (DHK-MTPene) depending upon the metal bound in the active site. Fe-containing acireductone dioxygenase (Fe-ARD) produces formate and 2-keto-4-methylthiobutyrate (KMTB), the alpha-ketoacid precursor of methionine in the methionine recycle pathway. Ni-containing acireductone dioxygenase (Ni-ARD) produces methylthiopropionate, carbon monoxide and formate, and does not lie on the methionine recycle pathway.</text>
</comment>
<comment type="catalytic activity">
    <reaction evidence="1">
        <text>1,2-dihydroxy-5-(methylsulfanyl)pent-1-en-3-one + O2 = 3-(methylsulfanyl)propanoate + CO + formate + 2 H(+)</text>
        <dbReference type="Rhea" id="RHEA:14161"/>
        <dbReference type="ChEBI" id="CHEBI:15378"/>
        <dbReference type="ChEBI" id="CHEBI:15379"/>
        <dbReference type="ChEBI" id="CHEBI:15740"/>
        <dbReference type="ChEBI" id="CHEBI:17245"/>
        <dbReference type="ChEBI" id="CHEBI:49016"/>
        <dbReference type="ChEBI" id="CHEBI:49252"/>
        <dbReference type="EC" id="1.13.11.53"/>
    </reaction>
</comment>
<comment type="catalytic activity">
    <reaction evidence="1">
        <text>1,2-dihydroxy-5-(methylsulfanyl)pent-1-en-3-one + O2 = 4-methylsulfanyl-2-oxobutanoate + formate + 2 H(+)</text>
        <dbReference type="Rhea" id="RHEA:24504"/>
        <dbReference type="ChEBI" id="CHEBI:15378"/>
        <dbReference type="ChEBI" id="CHEBI:15379"/>
        <dbReference type="ChEBI" id="CHEBI:15740"/>
        <dbReference type="ChEBI" id="CHEBI:16723"/>
        <dbReference type="ChEBI" id="CHEBI:49252"/>
        <dbReference type="EC" id="1.13.11.54"/>
    </reaction>
</comment>
<comment type="cofactor">
    <cofactor evidence="1">
        <name>Fe(2+)</name>
        <dbReference type="ChEBI" id="CHEBI:29033"/>
    </cofactor>
    <text evidence="1">Binds 1 Fe(2+) cation per monomer.</text>
</comment>
<comment type="cofactor">
    <cofactor evidence="1">
        <name>Ni(2+)</name>
        <dbReference type="ChEBI" id="CHEBI:49786"/>
    </cofactor>
    <text evidence="1">Binds 1 nickel ion per monomer.</text>
</comment>
<comment type="pathway">
    <text evidence="1">Amino-acid biosynthesis; L-methionine biosynthesis via salvage pathway; L-methionine from S-methyl-5-thio-alpha-D-ribose 1-phosphate: step 5/6.</text>
</comment>
<comment type="subunit">
    <text evidence="1">Monomer.</text>
</comment>
<comment type="similarity">
    <text evidence="1">Belongs to the acireductone dioxygenase (ARD) family.</text>
</comment>
<accession>A0RI45</accession>
<feature type="chain" id="PRO_0000359179" description="Acireductone dioxygenase">
    <location>
        <begin position="1"/>
        <end position="170"/>
    </location>
</feature>
<feature type="binding site" evidence="1">
    <location>
        <position position="99"/>
    </location>
    <ligand>
        <name>Fe(2+)</name>
        <dbReference type="ChEBI" id="CHEBI:29033"/>
    </ligand>
</feature>
<feature type="binding site" evidence="1">
    <location>
        <position position="99"/>
    </location>
    <ligand>
        <name>Ni(2+)</name>
        <dbReference type="ChEBI" id="CHEBI:49786"/>
    </ligand>
</feature>
<feature type="binding site" evidence="1">
    <location>
        <position position="101"/>
    </location>
    <ligand>
        <name>Fe(2+)</name>
        <dbReference type="ChEBI" id="CHEBI:29033"/>
    </ligand>
</feature>
<feature type="binding site" evidence="1">
    <location>
        <position position="101"/>
    </location>
    <ligand>
        <name>Ni(2+)</name>
        <dbReference type="ChEBI" id="CHEBI:49786"/>
    </ligand>
</feature>
<feature type="binding site" evidence="1">
    <location>
        <position position="105"/>
    </location>
    <ligand>
        <name>Fe(2+)</name>
        <dbReference type="ChEBI" id="CHEBI:29033"/>
    </ligand>
</feature>
<feature type="binding site" evidence="1">
    <location>
        <position position="105"/>
    </location>
    <ligand>
        <name>Ni(2+)</name>
        <dbReference type="ChEBI" id="CHEBI:49786"/>
    </ligand>
</feature>
<feature type="binding site" evidence="1">
    <location>
        <position position="144"/>
    </location>
    <ligand>
        <name>Fe(2+)</name>
        <dbReference type="ChEBI" id="CHEBI:29033"/>
    </ligand>
</feature>
<feature type="binding site" evidence="1">
    <location>
        <position position="144"/>
    </location>
    <ligand>
        <name>Ni(2+)</name>
        <dbReference type="ChEBI" id="CHEBI:49786"/>
    </ligand>
</feature>
<feature type="site" description="May play a role in metal incorporation in vivo" evidence="1">
    <location>
        <position position="98"/>
    </location>
</feature>
<feature type="site" description="May play a role in transmitting local conformational changes" evidence="1">
    <location>
        <position position="104"/>
    </location>
</feature>
<feature type="site" description="Important to generate the dianion" evidence="1">
    <location>
        <position position="107"/>
    </location>
</feature>
<organism>
    <name type="scientific">Bacillus thuringiensis (strain Al Hakam)</name>
    <dbReference type="NCBI Taxonomy" id="412694"/>
    <lineage>
        <taxon>Bacteria</taxon>
        <taxon>Bacillati</taxon>
        <taxon>Bacillota</taxon>
        <taxon>Bacilli</taxon>
        <taxon>Bacillales</taxon>
        <taxon>Bacillaceae</taxon>
        <taxon>Bacillus</taxon>
        <taxon>Bacillus cereus group</taxon>
    </lineage>
</organism>
<name>MTND_BACAH</name>
<proteinExistence type="inferred from homology"/>
<sequence length="170" mass="19577">MAQIRIHEVNTRIENEVEVSKFLQEEGVLYEKWNISKLPPHLNENYSLTDENKAEILAVFSKEIADVSVRRGYKAHDVISLSNSTPNLDELLINFQKEHHHTDDEVRFIVSGHGIFAIEGKDGTFFDVELEPGDLISVPENARHYFTLQDDRQVVAIRIFVTTEGWVPIY</sequence>
<dbReference type="EC" id="1.13.11.54" evidence="1"/>
<dbReference type="EC" id="1.13.11.53" evidence="1"/>
<dbReference type="EMBL" id="CP000485">
    <property type="protein sequence ID" value="ABK86888.1"/>
    <property type="molecule type" value="Genomic_DNA"/>
</dbReference>
<dbReference type="RefSeq" id="WP_000057310.1">
    <property type="nucleotide sequence ID" value="NC_008600.1"/>
</dbReference>
<dbReference type="SMR" id="A0RI45"/>
<dbReference type="KEGG" id="btl:BALH_3656"/>
<dbReference type="HOGENOM" id="CLU_125400_0_0_9"/>
<dbReference type="UniPathway" id="UPA00904">
    <property type="reaction ID" value="UER00878"/>
</dbReference>
<dbReference type="GO" id="GO:0010308">
    <property type="term" value="F:acireductone dioxygenase (Ni2+-requiring) activity"/>
    <property type="evidence" value="ECO:0007669"/>
    <property type="project" value="UniProtKB-UniRule"/>
</dbReference>
<dbReference type="GO" id="GO:0010309">
    <property type="term" value="F:acireductone dioxygenase [iron(II)-requiring] activity"/>
    <property type="evidence" value="ECO:0007669"/>
    <property type="project" value="UniProtKB-UniRule"/>
</dbReference>
<dbReference type="GO" id="GO:0005506">
    <property type="term" value="F:iron ion binding"/>
    <property type="evidence" value="ECO:0007669"/>
    <property type="project" value="UniProtKB-UniRule"/>
</dbReference>
<dbReference type="GO" id="GO:0016151">
    <property type="term" value="F:nickel cation binding"/>
    <property type="evidence" value="ECO:0007669"/>
    <property type="project" value="UniProtKB-UniRule"/>
</dbReference>
<dbReference type="GO" id="GO:0019509">
    <property type="term" value="P:L-methionine salvage from methylthioadenosine"/>
    <property type="evidence" value="ECO:0007669"/>
    <property type="project" value="UniProtKB-UniRule"/>
</dbReference>
<dbReference type="GO" id="GO:0019284">
    <property type="term" value="P:L-methionine salvage from S-adenosylmethionine"/>
    <property type="evidence" value="ECO:0007669"/>
    <property type="project" value="InterPro"/>
</dbReference>
<dbReference type="CDD" id="cd02232">
    <property type="entry name" value="cupin_ARD"/>
    <property type="match status" value="1"/>
</dbReference>
<dbReference type="FunFam" id="2.60.120.10:FF:000056">
    <property type="entry name" value="Acireductone dioxygenase"/>
    <property type="match status" value="1"/>
</dbReference>
<dbReference type="Gene3D" id="2.60.120.10">
    <property type="entry name" value="Jelly Rolls"/>
    <property type="match status" value="1"/>
</dbReference>
<dbReference type="HAMAP" id="MF_01682">
    <property type="entry name" value="Salvage_MtnD"/>
    <property type="match status" value="1"/>
</dbReference>
<dbReference type="InterPro" id="IPR004313">
    <property type="entry name" value="ARD"/>
</dbReference>
<dbReference type="InterPro" id="IPR023956">
    <property type="entry name" value="ARD_bac"/>
</dbReference>
<dbReference type="InterPro" id="IPR014710">
    <property type="entry name" value="RmlC-like_jellyroll"/>
</dbReference>
<dbReference type="InterPro" id="IPR011051">
    <property type="entry name" value="RmlC_Cupin_sf"/>
</dbReference>
<dbReference type="PANTHER" id="PTHR23418">
    <property type="entry name" value="ACIREDUCTONE DIOXYGENASE"/>
    <property type="match status" value="1"/>
</dbReference>
<dbReference type="PANTHER" id="PTHR23418:SF0">
    <property type="entry name" value="ACIREDUCTONE DIOXYGENASE"/>
    <property type="match status" value="1"/>
</dbReference>
<dbReference type="Pfam" id="PF03079">
    <property type="entry name" value="ARD"/>
    <property type="match status" value="1"/>
</dbReference>
<dbReference type="SUPFAM" id="SSF51182">
    <property type="entry name" value="RmlC-like cupins"/>
    <property type="match status" value="1"/>
</dbReference>